<feature type="chain" id="PRO_0000388220" description="ATPase get3">
    <location>
        <begin position="1"/>
        <end position="340"/>
    </location>
</feature>
<feature type="active site" evidence="1">
    <location>
        <position position="63"/>
    </location>
</feature>
<feature type="binding site" evidence="1">
    <location>
        <begin position="34"/>
        <end position="41"/>
    </location>
    <ligand>
        <name>ATP</name>
        <dbReference type="ChEBI" id="CHEBI:30616"/>
    </ligand>
</feature>
<feature type="binding site" evidence="1">
    <location>
        <position position="245"/>
    </location>
    <ligand>
        <name>ATP</name>
        <dbReference type="ChEBI" id="CHEBI:30616"/>
    </ligand>
</feature>
<feature type="binding site" evidence="1">
    <location>
        <position position="272"/>
    </location>
    <ligand>
        <name>ATP</name>
        <dbReference type="ChEBI" id="CHEBI:30616"/>
    </ligand>
</feature>
<feature type="binding site" evidence="1">
    <location>
        <position position="283"/>
    </location>
    <ligand>
        <name>Zn(2+)</name>
        <dbReference type="ChEBI" id="CHEBI:29105"/>
        <note>ligand shared between dimeric partners</note>
    </ligand>
</feature>
<feature type="binding site" evidence="1">
    <location>
        <position position="286"/>
    </location>
    <ligand>
        <name>Zn(2+)</name>
        <dbReference type="ChEBI" id="CHEBI:29105"/>
        <note>ligand shared between dimeric partners</note>
    </ligand>
</feature>
<keyword id="KW-0067">ATP-binding</keyword>
<keyword id="KW-0963">Cytoplasm</keyword>
<keyword id="KW-0256">Endoplasmic reticulum</keyword>
<keyword id="KW-0378">Hydrolase</keyword>
<keyword id="KW-0479">Metal-binding</keyword>
<keyword id="KW-0547">Nucleotide-binding</keyword>
<keyword id="KW-1185">Reference proteome</keyword>
<keyword id="KW-0813">Transport</keyword>
<keyword id="KW-0862">Zinc</keyword>
<proteinExistence type="inferred from homology"/>
<reference key="1">
    <citation type="journal article" date="2008" name="Nat. Biotechnol.">
        <title>Genome sequencing and analysis of the filamentous fungus Penicillium chrysogenum.</title>
        <authorList>
            <person name="van den Berg M.A."/>
            <person name="Albang R."/>
            <person name="Albermann K."/>
            <person name="Badger J.H."/>
            <person name="Daran J.-M."/>
            <person name="Driessen A.J.M."/>
            <person name="Garcia-Estrada C."/>
            <person name="Fedorova N.D."/>
            <person name="Harris D.M."/>
            <person name="Heijne W.H.M."/>
            <person name="Joardar V.S."/>
            <person name="Kiel J.A.K.W."/>
            <person name="Kovalchuk A."/>
            <person name="Martin J.F."/>
            <person name="Nierman W.C."/>
            <person name="Nijland J.G."/>
            <person name="Pronk J.T."/>
            <person name="Roubos J.A."/>
            <person name="van der Klei I.J."/>
            <person name="van Peij N.N.M.E."/>
            <person name="Veenhuis M."/>
            <person name="von Doehren H."/>
            <person name="Wagner C."/>
            <person name="Wortman J.R."/>
            <person name="Bovenberg R.A.L."/>
        </authorList>
    </citation>
    <scope>NUCLEOTIDE SEQUENCE [LARGE SCALE GENOMIC DNA]</scope>
    <source>
        <strain>ATCC 28089 / DSM 1075 / NRRL 1951 / Wisconsin 54-1255</strain>
    </source>
</reference>
<accession>B6H443</accession>
<organism>
    <name type="scientific">Penicillium rubens (strain ATCC 28089 / DSM 1075 / NRRL 1951 / Wisconsin 54-1255)</name>
    <name type="common">Penicillium chrysogenum</name>
    <dbReference type="NCBI Taxonomy" id="500485"/>
    <lineage>
        <taxon>Eukaryota</taxon>
        <taxon>Fungi</taxon>
        <taxon>Dikarya</taxon>
        <taxon>Ascomycota</taxon>
        <taxon>Pezizomycotina</taxon>
        <taxon>Eurotiomycetes</taxon>
        <taxon>Eurotiomycetidae</taxon>
        <taxon>Eurotiales</taxon>
        <taxon>Aspergillaceae</taxon>
        <taxon>Penicillium</taxon>
        <taxon>Penicillium chrysogenum species complex</taxon>
    </lineage>
</organism>
<name>GET3_PENRW</name>
<sequence length="340" mass="37601">MSSAVVHGDDLDMEPTLQSVLNQNTLRWIFVGGKGGVGKTTTSCSLAIQLAKVRKSVLLISTDPAHNLSDAFGQKFGKEARLIDGYSNLSAMEIDPNGSIQDLLATGDGQGEDPMAGLGMGNMMQDLAFSIPGVDEAMSFAEVLKQVKSLSYEVIVFDTAPTGHTLRFLQFPTVLEKALAKLSQLSTQFGPMLNSILGARGGLPGGQNMDELLQKMESLRETISEVNTQFKNPDMTTFVCVCIAEFLSLYETERMIQELTSYNIDTHSIVVNQLLFPKEGSDCEQCTARRKMQKKYLDQIEELYEDFNVVRMPMLVEEVRGKEKLEKFSEMLVTPYVPPQ</sequence>
<protein>
    <recommendedName>
        <fullName evidence="1">ATPase get3</fullName>
        <ecNumber evidence="1">3.6.-.-</ecNumber>
    </recommendedName>
    <alternativeName>
        <fullName evidence="1">Arsenical pump-driving ATPase</fullName>
    </alternativeName>
    <alternativeName>
        <fullName evidence="1">Arsenite-stimulated ATPase</fullName>
    </alternativeName>
    <alternativeName>
        <fullName evidence="1">Golgi to ER traffic protein 3</fullName>
    </alternativeName>
    <alternativeName>
        <fullName evidence="1">Guided entry of tail-anchored proteins 3</fullName>
    </alternativeName>
</protein>
<comment type="function">
    <text evidence="1">ATPase required for the post-translational delivery of tail-anchored (TA) proteins to the endoplasmic reticulum. Recognizes and selectively binds the transmembrane domain of TA proteins in the cytosol. This complex then targets to the endoplasmic reticulum by membrane-bound receptors, where the tail-anchored protein is released for insertion. This process is regulated by ATP binding and hydrolysis. ATP binding drives the homodimer towards the closed dimer state, facilitating recognition of newly synthesized TA membrane proteins. ATP hydrolysis is required for insertion. Subsequently, the homodimer reverts towards the open dimer state, lowering its affinity for the membrane-bound receptor, and returning it to the cytosol to initiate a new round of targeting.</text>
</comment>
<comment type="subunit">
    <text evidence="1">Homodimer.</text>
</comment>
<comment type="subcellular location">
    <subcellularLocation>
        <location evidence="1">Cytoplasm</location>
    </subcellularLocation>
    <subcellularLocation>
        <location evidence="1">Endoplasmic reticulum</location>
    </subcellularLocation>
</comment>
<comment type="similarity">
    <text evidence="1">Belongs to the arsA ATPase family.</text>
</comment>
<gene>
    <name type="primary">get3</name>
    <name type="ORF">Pc13g09610</name>
</gene>
<dbReference type="EC" id="3.6.-.-" evidence="1"/>
<dbReference type="EMBL" id="AM920428">
    <property type="protein sequence ID" value="CAP92030.1"/>
    <property type="molecule type" value="Genomic_DNA"/>
</dbReference>
<dbReference type="RefSeq" id="XP_002559384.1">
    <property type="nucleotide sequence ID" value="XM_002559338.1"/>
</dbReference>
<dbReference type="SMR" id="B6H443"/>
<dbReference type="STRING" id="500485.B6H443"/>
<dbReference type="GeneID" id="8317486"/>
<dbReference type="KEGG" id="pcs:N7525_003218"/>
<dbReference type="VEuPathDB" id="FungiDB:PCH_Pc13g09610"/>
<dbReference type="eggNOG" id="KOG2825">
    <property type="taxonomic scope" value="Eukaryota"/>
</dbReference>
<dbReference type="HOGENOM" id="CLU_040761_0_0_1"/>
<dbReference type="OMA" id="MDAPYEF"/>
<dbReference type="OrthoDB" id="1770at2759"/>
<dbReference type="BioCyc" id="PCHR:PC13G09610-MONOMER"/>
<dbReference type="Proteomes" id="UP000000724">
    <property type="component" value="Contig Pc00c13"/>
</dbReference>
<dbReference type="GO" id="GO:0043529">
    <property type="term" value="C:GET complex"/>
    <property type="evidence" value="ECO:0007669"/>
    <property type="project" value="TreeGrafter"/>
</dbReference>
<dbReference type="GO" id="GO:0005524">
    <property type="term" value="F:ATP binding"/>
    <property type="evidence" value="ECO:0007669"/>
    <property type="project" value="UniProtKB-UniRule"/>
</dbReference>
<dbReference type="GO" id="GO:0016887">
    <property type="term" value="F:ATP hydrolysis activity"/>
    <property type="evidence" value="ECO:0007669"/>
    <property type="project" value="InterPro"/>
</dbReference>
<dbReference type="GO" id="GO:0046872">
    <property type="term" value="F:metal ion binding"/>
    <property type="evidence" value="ECO:0007669"/>
    <property type="project" value="UniProtKB-KW"/>
</dbReference>
<dbReference type="GO" id="GO:0071816">
    <property type="term" value="P:tail-anchored membrane protein insertion into ER membrane"/>
    <property type="evidence" value="ECO:0007669"/>
    <property type="project" value="TreeGrafter"/>
</dbReference>
<dbReference type="CDD" id="cd02035">
    <property type="entry name" value="ArsA"/>
    <property type="match status" value="1"/>
</dbReference>
<dbReference type="FunFam" id="3.40.50.300:FF:000235">
    <property type="entry name" value="ATPase ASNA1"/>
    <property type="match status" value="1"/>
</dbReference>
<dbReference type="Gene3D" id="3.40.50.300">
    <property type="entry name" value="P-loop containing nucleotide triphosphate hydrolases"/>
    <property type="match status" value="1"/>
</dbReference>
<dbReference type="HAMAP" id="MF_03112">
    <property type="entry name" value="Asna1_Get3"/>
    <property type="match status" value="1"/>
</dbReference>
<dbReference type="InterPro" id="IPR025723">
    <property type="entry name" value="Anion-transp_ATPase-like_dom"/>
</dbReference>
<dbReference type="InterPro" id="IPR016300">
    <property type="entry name" value="ATPase_ArsA/GET3"/>
</dbReference>
<dbReference type="InterPro" id="IPR027542">
    <property type="entry name" value="ATPase_ArsA/GET3_euk"/>
</dbReference>
<dbReference type="InterPro" id="IPR027417">
    <property type="entry name" value="P-loop_NTPase"/>
</dbReference>
<dbReference type="NCBIfam" id="TIGR00345">
    <property type="entry name" value="GET3_arsA_TRC40"/>
    <property type="match status" value="1"/>
</dbReference>
<dbReference type="PANTHER" id="PTHR10803">
    <property type="entry name" value="ARSENICAL PUMP-DRIVING ATPASE ARSENITE-TRANSLOCATING ATPASE"/>
    <property type="match status" value="1"/>
</dbReference>
<dbReference type="PANTHER" id="PTHR10803:SF3">
    <property type="entry name" value="ATPASE GET3"/>
    <property type="match status" value="1"/>
</dbReference>
<dbReference type="Pfam" id="PF02374">
    <property type="entry name" value="ArsA_ATPase"/>
    <property type="match status" value="1"/>
</dbReference>
<dbReference type="SUPFAM" id="SSF52540">
    <property type="entry name" value="P-loop containing nucleoside triphosphate hydrolases"/>
    <property type="match status" value="1"/>
</dbReference>
<evidence type="ECO:0000255" key="1">
    <source>
        <dbReference type="HAMAP-Rule" id="MF_03112"/>
    </source>
</evidence>